<gene>
    <name evidence="1" type="primary">rplX</name>
    <name type="ordered locus">MW2158</name>
</gene>
<sequence>MHIKKGDNVKVIAGKDKGKEGKVIATLPKKDRVVVEGVNIMKKHQKPTQLNPEGGILETEAAIHVSNVQLLDPKTNEPTRVGYKFVDGKKVRIAKKSGEEIKSNN</sequence>
<dbReference type="EMBL" id="BA000033">
    <property type="protein sequence ID" value="BAB96023.1"/>
    <property type="molecule type" value="Genomic_DNA"/>
</dbReference>
<dbReference type="RefSeq" id="WP_000547687.1">
    <property type="nucleotide sequence ID" value="NC_003923.1"/>
</dbReference>
<dbReference type="PDB" id="8Y36">
    <property type="method" value="EM"/>
    <property type="resolution" value="2.65 A"/>
    <property type="chains" value="S=2-104"/>
</dbReference>
<dbReference type="PDB" id="8Y37">
    <property type="method" value="EM"/>
    <property type="resolution" value="2.53 A"/>
    <property type="chains" value="S=2-104"/>
</dbReference>
<dbReference type="PDB" id="8Y38">
    <property type="method" value="EM"/>
    <property type="resolution" value="2.58 A"/>
    <property type="chains" value="S=2-104"/>
</dbReference>
<dbReference type="PDB" id="8Y39">
    <property type="method" value="EM"/>
    <property type="resolution" value="3.60 A"/>
    <property type="chains" value="S=2-104"/>
</dbReference>
<dbReference type="PDBsum" id="8Y36"/>
<dbReference type="PDBsum" id="8Y37"/>
<dbReference type="PDBsum" id="8Y38"/>
<dbReference type="PDBsum" id="8Y39"/>
<dbReference type="EMDB" id="EMD-38873"/>
<dbReference type="EMDB" id="EMD-38874"/>
<dbReference type="EMDB" id="EMD-38875"/>
<dbReference type="EMDB" id="EMD-38876"/>
<dbReference type="SMR" id="P60736"/>
<dbReference type="KEGG" id="sam:MW2158"/>
<dbReference type="HOGENOM" id="CLU_093315_2_0_9"/>
<dbReference type="GO" id="GO:1990904">
    <property type="term" value="C:ribonucleoprotein complex"/>
    <property type="evidence" value="ECO:0007669"/>
    <property type="project" value="UniProtKB-KW"/>
</dbReference>
<dbReference type="GO" id="GO:0005840">
    <property type="term" value="C:ribosome"/>
    <property type="evidence" value="ECO:0007669"/>
    <property type="project" value="UniProtKB-KW"/>
</dbReference>
<dbReference type="GO" id="GO:0019843">
    <property type="term" value="F:rRNA binding"/>
    <property type="evidence" value="ECO:0007669"/>
    <property type="project" value="UniProtKB-UniRule"/>
</dbReference>
<dbReference type="GO" id="GO:0003735">
    <property type="term" value="F:structural constituent of ribosome"/>
    <property type="evidence" value="ECO:0007669"/>
    <property type="project" value="InterPro"/>
</dbReference>
<dbReference type="GO" id="GO:0006412">
    <property type="term" value="P:translation"/>
    <property type="evidence" value="ECO:0007669"/>
    <property type="project" value="UniProtKB-UniRule"/>
</dbReference>
<dbReference type="CDD" id="cd06089">
    <property type="entry name" value="KOW_RPL26"/>
    <property type="match status" value="1"/>
</dbReference>
<dbReference type="FunFam" id="2.30.30.30:FF:000004">
    <property type="entry name" value="50S ribosomal protein L24"/>
    <property type="match status" value="1"/>
</dbReference>
<dbReference type="Gene3D" id="2.30.30.30">
    <property type="match status" value="1"/>
</dbReference>
<dbReference type="HAMAP" id="MF_01326_B">
    <property type="entry name" value="Ribosomal_uL24_B"/>
    <property type="match status" value="1"/>
</dbReference>
<dbReference type="InterPro" id="IPR005824">
    <property type="entry name" value="KOW"/>
</dbReference>
<dbReference type="InterPro" id="IPR014722">
    <property type="entry name" value="Rib_uL2_dom2"/>
</dbReference>
<dbReference type="InterPro" id="IPR003256">
    <property type="entry name" value="Ribosomal_uL24"/>
</dbReference>
<dbReference type="InterPro" id="IPR005825">
    <property type="entry name" value="Ribosomal_uL24_CS"/>
</dbReference>
<dbReference type="InterPro" id="IPR041988">
    <property type="entry name" value="Ribosomal_uL24_KOW"/>
</dbReference>
<dbReference type="InterPro" id="IPR008991">
    <property type="entry name" value="Translation_prot_SH3-like_sf"/>
</dbReference>
<dbReference type="NCBIfam" id="TIGR01079">
    <property type="entry name" value="rplX_bact"/>
    <property type="match status" value="1"/>
</dbReference>
<dbReference type="PANTHER" id="PTHR12903">
    <property type="entry name" value="MITOCHONDRIAL RIBOSOMAL PROTEIN L24"/>
    <property type="match status" value="1"/>
</dbReference>
<dbReference type="Pfam" id="PF00467">
    <property type="entry name" value="KOW"/>
    <property type="match status" value="1"/>
</dbReference>
<dbReference type="Pfam" id="PF17136">
    <property type="entry name" value="ribosomal_L24"/>
    <property type="match status" value="1"/>
</dbReference>
<dbReference type="SMART" id="SM00739">
    <property type="entry name" value="KOW"/>
    <property type="match status" value="1"/>
</dbReference>
<dbReference type="SUPFAM" id="SSF50104">
    <property type="entry name" value="Translation proteins SH3-like domain"/>
    <property type="match status" value="1"/>
</dbReference>
<dbReference type="PROSITE" id="PS01108">
    <property type="entry name" value="RIBOSOMAL_L24"/>
    <property type="match status" value="1"/>
</dbReference>
<reference key="1">
    <citation type="journal article" date="2002" name="Lancet">
        <title>Genome and virulence determinants of high virulence community-acquired MRSA.</title>
        <authorList>
            <person name="Baba T."/>
            <person name="Takeuchi F."/>
            <person name="Kuroda M."/>
            <person name="Yuzawa H."/>
            <person name="Aoki K."/>
            <person name="Oguchi A."/>
            <person name="Nagai Y."/>
            <person name="Iwama N."/>
            <person name="Asano K."/>
            <person name="Naimi T."/>
            <person name="Kuroda H."/>
            <person name="Cui L."/>
            <person name="Yamamoto K."/>
            <person name="Hiramatsu K."/>
        </authorList>
    </citation>
    <scope>NUCLEOTIDE SEQUENCE [LARGE SCALE GENOMIC DNA]</scope>
    <source>
        <strain>MW2</strain>
    </source>
</reference>
<name>RL24_STAAW</name>
<comment type="function">
    <text evidence="1">One of two assembly initiator proteins, it binds directly to the 5'-end of the 23S rRNA, where it nucleates assembly of the 50S subunit.</text>
</comment>
<comment type="function">
    <text evidence="1">One of the proteins that surrounds the polypeptide exit tunnel on the outside of the subunit.</text>
</comment>
<comment type="subunit">
    <text evidence="1">Part of the 50S ribosomal subunit.</text>
</comment>
<comment type="similarity">
    <text evidence="1">Belongs to the universal ribosomal protein uL24 family.</text>
</comment>
<feature type="chain" id="PRO_0000130719" description="Large ribosomal subunit protein uL24">
    <location>
        <begin position="1"/>
        <end position="105"/>
    </location>
</feature>
<accession>P60736</accession>
<accession>Q99S32</accession>
<evidence type="ECO:0000255" key="1">
    <source>
        <dbReference type="HAMAP-Rule" id="MF_01326"/>
    </source>
</evidence>
<evidence type="ECO:0000305" key="2"/>
<protein>
    <recommendedName>
        <fullName evidence="1">Large ribosomal subunit protein uL24</fullName>
    </recommendedName>
    <alternativeName>
        <fullName evidence="2">50S ribosomal protein L24</fullName>
    </alternativeName>
</protein>
<organism>
    <name type="scientific">Staphylococcus aureus (strain MW2)</name>
    <dbReference type="NCBI Taxonomy" id="196620"/>
    <lineage>
        <taxon>Bacteria</taxon>
        <taxon>Bacillati</taxon>
        <taxon>Bacillota</taxon>
        <taxon>Bacilli</taxon>
        <taxon>Bacillales</taxon>
        <taxon>Staphylococcaceae</taxon>
        <taxon>Staphylococcus</taxon>
    </lineage>
</organism>
<keyword id="KW-0002">3D-structure</keyword>
<keyword id="KW-0687">Ribonucleoprotein</keyword>
<keyword id="KW-0689">Ribosomal protein</keyword>
<keyword id="KW-0694">RNA-binding</keyword>
<keyword id="KW-0699">rRNA-binding</keyword>
<proteinExistence type="evidence at protein level"/>